<proteinExistence type="inferred from homology"/>
<keyword id="KW-0963">Cytoplasm</keyword>
<keyword id="KW-0251">Elongation factor</keyword>
<keyword id="KW-0342">GTP-binding</keyword>
<keyword id="KW-0378">Hydrolase</keyword>
<keyword id="KW-0460">Magnesium</keyword>
<keyword id="KW-0479">Metal-binding</keyword>
<keyword id="KW-0547">Nucleotide-binding</keyword>
<keyword id="KW-0648">Protein biosynthesis</keyword>
<keyword id="KW-1185">Reference proteome</keyword>
<accession>Q2JFH8</accession>
<feature type="chain" id="PRO_1000015658" description="Elongation factor Tu">
    <location>
        <begin position="1"/>
        <end position="397"/>
    </location>
</feature>
<feature type="domain" description="tr-type G">
    <location>
        <begin position="10"/>
        <end position="206"/>
    </location>
</feature>
<feature type="region of interest" description="G1" evidence="1">
    <location>
        <begin position="19"/>
        <end position="26"/>
    </location>
</feature>
<feature type="region of interest" description="G2" evidence="1">
    <location>
        <begin position="62"/>
        <end position="66"/>
    </location>
</feature>
<feature type="region of interest" description="G3" evidence="1">
    <location>
        <begin position="83"/>
        <end position="86"/>
    </location>
</feature>
<feature type="region of interest" description="G4" evidence="1">
    <location>
        <begin position="138"/>
        <end position="141"/>
    </location>
</feature>
<feature type="region of interest" description="G5" evidence="1">
    <location>
        <begin position="176"/>
        <end position="178"/>
    </location>
</feature>
<feature type="binding site" evidence="2">
    <location>
        <begin position="19"/>
        <end position="26"/>
    </location>
    <ligand>
        <name>GTP</name>
        <dbReference type="ChEBI" id="CHEBI:37565"/>
    </ligand>
</feature>
<feature type="binding site" evidence="2">
    <location>
        <position position="26"/>
    </location>
    <ligand>
        <name>Mg(2+)</name>
        <dbReference type="ChEBI" id="CHEBI:18420"/>
    </ligand>
</feature>
<feature type="binding site" evidence="2">
    <location>
        <begin position="83"/>
        <end position="87"/>
    </location>
    <ligand>
        <name>GTP</name>
        <dbReference type="ChEBI" id="CHEBI:37565"/>
    </ligand>
</feature>
<feature type="binding site" evidence="2">
    <location>
        <begin position="138"/>
        <end position="141"/>
    </location>
    <ligand>
        <name>GTP</name>
        <dbReference type="ChEBI" id="CHEBI:37565"/>
    </ligand>
</feature>
<evidence type="ECO:0000250" key="1"/>
<evidence type="ECO:0000255" key="2">
    <source>
        <dbReference type="HAMAP-Rule" id="MF_00118"/>
    </source>
</evidence>
<protein>
    <recommendedName>
        <fullName evidence="2">Elongation factor Tu</fullName>
        <shortName evidence="2">EF-Tu</shortName>
        <ecNumber evidence="2">3.6.5.3</ecNumber>
    </recommendedName>
</protein>
<name>EFTU_FRACC</name>
<gene>
    <name evidence="2" type="primary">tuf</name>
    <name type="ordered locus">Francci3_0580</name>
</gene>
<sequence>MAKQKFERTKPHVNIGTIGHIDHGKTTLTAAITKVLHDAYPDLNPFTPFDQIDKAPEEKARGITISIAHVEYQTDTRHYAHVDCPGHADYIKNMITGAAQMDGAILVVSATDGPMPQTKEHVLLARQVGVPYIVVALNKADMVDDEEILELVELEVRELLSSYEFPGDDVPVVRVSALKALEGDKEWGAKLLELMAAVDESIPEPQRDIDRPFLMPIEDVFTITGRGTVVTGRVERGIVKVNETVEIVGIKPETTSTTVTGVEMFRKLLDEGRAGDNVGLLLRGIKREDVERGQVIVKPKSITPHTVFEARVYILNKDEGGRHTPFFKNYRPQFYFRTTDVTGVVTLPEGTEMVMPGDNTEMTVELIQPIAMEEGLRFAIREGGRTVGAGQVTKVLK</sequence>
<reference key="1">
    <citation type="journal article" date="2007" name="Genome Res.">
        <title>Genome characteristics of facultatively symbiotic Frankia sp. strains reflect host range and host plant biogeography.</title>
        <authorList>
            <person name="Normand P."/>
            <person name="Lapierre P."/>
            <person name="Tisa L.S."/>
            <person name="Gogarten J.P."/>
            <person name="Alloisio N."/>
            <person name="Bagnarol E."/>
            <person name="Bassi C.A."/>
            <person name="Berry A.M."/>
            <person name="Bickhart D.M."/>
            <person name="Choisne N."/>
            <person name="Couloux A."/>
            <person name="Cournoyer B."/>
            <person name="Cruveiller S."/>
            <person name="Daubin V."/>
            <person name="Demange N."/>
            <person name="Francino M.P."/>
            <person name="Goltsman E."/>
            <person name="Huang Y."/>
            <person name="Kopp O.R."/>
            <person name="Labarre L."/>
            <person name="Lapidus A."/>
            <person name="Lavire C."/>
            <person name="Marechal J."/>
            <person name="Martinez M."/>
            <person name="Mastronunzio J.E."/>
            <person name="Mullin B.C."/>
            <person name="Niemann J."/>
            <person name="Pujic P."/>
            <person name="Rawnsley T."/>
            <person name="Rouy Z."/>
            <person name="Schenowitz C."/>
            <person name="Sellstedt A."/>
            <person name="Tavares F."/>
            <person name="Tomkins J.P."/>
            <person name="Vallenet D."/>
            <person name="Valverde C."/>
            <person name="Wall L.G."/>
            <person name="Wang Y."/>
            <person name="Medigue C."/>
            <person name="Benson D.R."/>
        </authorList>
    </citation>
    <scope>NUCLEOTIDE SEQUENCE [LARGE SCALE GENOMIC DNA]</scope>
    <source>
        <strain>DSM 45818 / CECT 9043 / HFP020203 / CcI3</strain>
    </source>
</reference>
<organism>
    <name type="scientific">Frankia casuarinae (strain DSM 45818 / CECT 9043 / HFP020203 / CcI3)</name>
    <dbReference type="NCBI Taxonomy" id="106370"/>
    <lineage>
        <taxon>Bacteria</taxon>
        <taxon>Bacillati</taxon>
        <taxon>Actinomycetota</taxon>
        <taxon>Actinomycetes</taxon>
        <taxon>Frankiales</taxon>
        <taxon>Frankiaceae</taxon>
        <taxon>Frankia</taxon>
    </lineage>
</organism>
<comment type="function">
    <text evidence="2">GTP hydrolase that promotes the GTP-dependent binding of aminoacyl-tRNA to the A-site of ribosomes during protein biosynthesis.</text>
</comment>
<comment type="catalytic activity">
    <reaction evidence="2">
        <text>GTP + H2O = GDP + phosphate + H(+)</text>
        <dbReference type="Rhea" id="RHEA:19669"/>
        <dbReference type="ChEBI" id="CHEBI:15377"/>
        <dbReference type="ChEBI" id="CHEBI:15378"/>
        <dbReference type="ChEBI" id="CHEBI:37565"/>
        <dbReference type="ChEBI" id="CHEBI:43474"/>
        <dbReference type="ChEBI" id="CHEBI:58189"/>
        <dbReference type="EC" id="3.6.5.3"/>
    </reaction>
    <physiologicalReaction direction="left-to-right" evidence="2">
        <dbReference type="Rhea" id="RHEA:19670"/>
    </physiologicalReaction>
</comment>
<comment type="subunit">
    <text evidence="2">Monomer.</text>
</comment>
<comment type="subcellular location">
    <subcellularLocation>
        <location evidence="2">Cytoplasm</location>
    </subcellularLocation>
</comment>
<comment type="similarity">
    <text evidence="2">Belongs to the TRAFAC class translation factor GTPase superfamily. Classic translation factor GTPase family. EF-Tu/EF-1A subfamily.</text>
</comment>
<dbReference type="EC" id="3.6.5.3" evidence="2"/>
<dbReference type="EMBL" id="CP000249">
    <property type="protein sequence ID" value="ABD09964.1"/>
    <property type="molecule type" value="Genomic_DNA"/>
</dbReference>
<dbReference type="RefSeq" id="WP_011435038.1">
    <property type="nucleotide sequence ID" value="NZ_JENI01000032.1"/>
</dbReference>
<dbReference type="SMR" id="Q2JFH8"/>
<dbReference type="STRING" id="106370.Francci3_0580"/>
<dbReference type="KEGG" id="fra:Francci3_0580"/>
<dbReference type="eggNOG" id="COG0050">
    <property type="taxonomic scope" value="Bacteria"/>
</dbReference>
<dbReference type="HOGENOM" id="CLU_007265_0_1_11"/>
<dbReference type="OrthoDB" id="9803139at2"/>
<dbReference type="PhylomeDB" id="Q2JFH8"/>
<dbReference type="Proteomes" id="UP000001937">
    <property type="component" value="Chromosome"/>
</dbReference>
<dbReference type="GO" id="GO:0005829">
    <property type="term" value="C:cytosol"/>
    <property type="evidence" value="ECO:0007669"/>
    <property type="project" value="TreeGrafter"/>
</dbReference>
<dbReference type="GO" id="GO:0005525">
    <property type="term" value="F:GTP binding"/>
    <property type="evidence" value="ECO:0007669"/>
    <property type="project" value="UniProtKB-UniRule"/>
</dbReference>
<dbReference type="GO" id="GO:0003924">
    <property type="term" value="F:GTPase activity"/>
    <property type="evidence" value="ECO:0007669"/>
    <property type="project" value="InterPro"/>
</dbReference>
<dbReference type="GO" id="GO:0003746">
    <property type="term" value="F:translation elongation factor activity"/>
    <property type="evidence" value="ECO:0007669"/>
    <property type="project" value="UniProtKB-UniRule"/>
</dbReference>
<dbReference type="CDD" id="cd01884">
    <property type="entry name" value="EF_Tu"/>
    <property type="match status" value="1"/>
</dbReference>
<dbReference type="CDD" id="cd03697">
    <property type="entry name" value="EFTU_II"/>
    <property type="match status" value="1"/>
</dbReference>
<dbReference type="CDD" id="cd03707">
    <property type="entry name" value="EFTU_III"/>
    <property type="match status" value="1"/>
</dbReference>
<dbReference type="FunFam" id="2.40.30.10:FF:000001">
    <property type="entry name" value="Elongation factor Tu"/>
    <property type="match status" value="1"/>
</dbReference>
<dbReference type="FunFam" id="3.40.50.300:FF:000003">
    <property type="entry name" value="Elongation factor Tu"/>
    <property type="match status" value="1"/>
</dbReference>
<dbReference type="Gene3D" id="3.40.50.300">
    <property type="entry name" value="P-loop containing nucleotide triphosphate hydrolases"/>
    <property type="match status" value="1"/>
</dbReference>
<dbReference type="Gene3D" id="2.40.30.10">
    <property type="entry name" value="Translation factors"/>
    <property type="match status" value="2"/>
</dbReference>
<dbReference type="HAMAP" id="MF_00118_B">
    <property type="entry name" value="EF_Tu_B"/>
    <property type="match status" value="1"/>
</dbReference>
<dbReference type="InterPro" id="IPR041709">
    <property type="entry name" value="EF-Tu_GTP-bd"/>
</dbReference>
<dbReference type="InterPro" id="IPR050055">
    <property type="entry name" value="EF-Tu_GTPase"/>
</dbReference>
<dbReference type="InterPro" id="IPR004161">
    <property type="entry name" value="EFTu-like_2"/>
</dbReference>
<dbReference type="InterPro" id="IPR033720">
    <property type="entry name" value="EFTU_2"/>
</dbReference>
<dbReference type="InterPro" id="IPR031157">
    <property type="entry name" value="G_TR_CS"/>
</dbReference>
<dbReference type="InterPro" id="IPR027417">
    <property type="entry name" value="P-loop_NTPase"/>
</dbReference>
<dbReference type="InterPro" id="IPR005225">
    <property type="entry name" value="Small_GTP-bd"/>
</dbReference>
<dbReference type="InterPro" id="IPR000795">
    <property type="entry name" value="T_Tr_GTP-bd_dom"/>
</dbReference>
<dbReference type="InterPro" id="IPR009000">
    <property type="entry name" value="Transl_B-barrel_sf"/>
</dbReference>
<dbReference type="InterPro" id="IPR009001">
    <property type="entry name" value="Transl_elong_EF1A/Init_IF2_C"/>
</dbReference>
<dbReference type="InterPro" id="IPR004541">
    <property type="entry name" value="Transl_elong_EFTu/EF1A_bac/org"/>
</dbReference>
<dbReference type="InterPro" id="IPR004160">
    <property type="entry name" value="Transl_elong_EFTu/EF1A_C"/>
</dbReference>
<dbReference type="NCBIfam" id="TIGR00485">
    <property type="entry name" value="EF-Tu"/>
    <property type="match status" value="1"/>
</dbReference>
<dbReference type="NCBIfam" id="NF000766">
    <property type="entry name" value="PRK00049.1"/>
    <property type="match status" value="1"/>
</dbReference>
<dbReference type="NCBIfam" id="NF009372">
    <property type="entry name" value="PRK12735.1"/>
    <property type="match status" value="1"/>
</dbReference>
<dbReference type="NCBIfam" id="NF009373">
    <property type="entry name" value="PRK12736.1"/>
    <property type="match status" value="1"/>
</dbReference>
<dbReference type="NCBIfam" id="TIGR00231">
    <property type="entry name" value="small_GTP"/>
    <property type="match status" value="1"/>
</dbReference>
<dbReference type="PANTHER" id="PTHR43721:SF22">
    <property type="entry name" value="ELONGATION FACTOR TU, MITOCHONDRIAL"/>
    <property type="match status" value="1"/>
</dbReference>
<dbReference type="PANTHER" id="PTHR43721">
    <property type="entry name" value="ELONGATION FACTOR TU-RELATED"/>
    <property type="match status" value="1"/>
</dbReference>
<dbReference type="Pfam" id="PF00009">
    <property type="entry name" value="GTP_EFTU"/>
    <property type="match status" value="1"/>
</dbReference>
<dbReference type="Pfam" id="PF03144">
    <property type="entry name" value="GTP_EFTU_D2"/>
    <property type="match status" value="1"/>
</dbReference>
<dbReference type="Pfam" id="PF03143">
    <property type="entry name" value="GTP_EFTU_D3"/>
    <property type="match status" value="1"/>
</dbReference>
<dbReference type="PRINTS" id="PR00315">
    <property type="entry name" value="ELONGATNFCT"/>
</dbReference>
<dbReference type="SUPFAM" id="SSF50465">
    <property type="entry name" value="EF-Tu/eEF-1alpha/eIF2-gamma C-terminal domain"/>
    <property type="match status" value="1"/>
</dbReference>
<dbReference type="SUPFAM" id="SSF52540">
    <property type="entry name" value="P-loop containing nucleoside triphosphate hydrolases"/>
    <property type="match status" value="1"/>
</dbReference>
<dbReference type="SUPFAM" id="SSF50447">
    <property type="entry name" value="Translation proteins"/>
    <property type="match status" value="1"/>
</dbReference>
<dbReference type="PROSITE" id="PS00301">
    <property type="entry name" value="G_TR_1"/>
    <property type="match status" value="1"/>
</dbReference>
<dbReference type="PROSITE" id="PS51722">
    <property type="entry name" value="G_TR_2"/>
    <property type="match status" value="1"/>
</dbReference>